<reference key="1">
    <citation type="journal article" date="2001" name="Science">
        <title>The genome of the natural genetic engineer Agrobacterium tumefaciens C58.</title>
        <authorList>
            <person name="Wood D.W."/>
            <person name="Setubal J.C."/>
            <person name="Kaul R."/>
            <person name="Monks D.E."/>
            <person name="Kitajima J.P."/>
            <person name="Okura V.K."/>
            <person name="Zhou Y."/>
            <person name="Chen L."/>
            <person name="Wood G.E."/>
            <person name="Almeida N.F. Jr."/>
            <person name="Woo L."/>
            <person name="Chen Y."/>
            <person name="Paulsen I.T."/>
            <person name="Eisen J.A."/>
            <person name="Karp P.D."/>
            <person name="Bovee D. Sr."/>
            <person name="Chapman P."/>
            <person name="Clendenning J."/>
            <person name="Deatherage G."/>
            <person name="Gillet W."/>
            <person name="Grant C."/>
            <person name="Kutyavin T."/>
            <person name="Levy R."/>
            <person name="Li M.-J."/>
            <person name="McClelland E."/>
            <person name="Palmieri A."/>
            <person name="Raymond C."/>
            <person name="Rouse G."/>
            <person name="Saenphimmachak C."/>
            <person name="Wu Z."/>
            <person name="Romero P."/>
            <person name="Gordon D."/>
            <person name="Zhang S."/>
            <person name="Yoo H."/>
            <person name="Tao Y."/>
            <person name="Biddle P."/>
            <person name="Jung M."/>
            <person name="Krespan W."/>
            <person name="Perry M."/>
            <person name="Gordon-Kamm B."/>
            <person name="Liao L."/>
            <person name="Kim S."/>
            <person name="Hendrick C."/>
            <person name="Zhao Z.-Y."/>
            <person name="Dolan M."/>
            <person name="Chumley F."/>
            <person name="Tingey S.V."/>
            <person name="Tomb J.-F."/>
            <person name="Gordon M.P."/>
            <person name="Olson M.V."/>
            <person name="Nester E.W."/>
        </authorList>
    </citation>
    <scope>NUCLEOTIDE SEQUENCE [LARGE SCALE GENOMIC DNA]</scope>
    <source>
        <strain>C58 / ATCC 33970</strain>
    </source>
</reference>
<reference key="2">
    <citation type="journal article" date="2001" name="Science">
        <title>Genome sequence of the plant pathogen and biotechnology agent Agrobacterium tumefaciens C58.</title>
        <authorList>
            <person name="Goodner B."/>
            <person name="Hinkle G."/>
            <person name="Gattung S."/>
            <person name="Miller N."/>
            <person name="Blanchard M."/>
            <person name="Qurollo B."/>
            <person name="Goldman B.S."/>
            <person name="Cao Y."/>
            <person name="Askenazi M."/>
            <person name="Halling C."/>
            <person name="Mullin L."/>
            <person name="Houmiel K."/>
            <person name="Gordon J."/>
            <person name="Vaudin M."/>
            <person name="Iartchouk O."/>
            <person name="Epp A."/>
            <person name="Liu F."/>
            <person name="Wollam C."/>
            <person name="Allinger M."/>
            <person name="Doughty D."/>
            <person name="Scott C."/>
            <person name="Lappas C."/>
            <person name="Markelz B."/>
            <person name="Flanagan C."/>
            <person name="Crowell C."/>
            <person name="Gurson J."/>
            <person name="Lomo C."/>
            <person name="Sear C."/>
            <person name="Strub G."/>
            <person name="Cielo C."/>
            <person name="Slater S."/>
        </authorList>
    </citation>
    <scope>NUCLEOTIDE SEQUENCE [LARGE SCALE GENOMIC DNA]</scope>
    <source>
        <strain>C58 / ATCC 33970</strain>
    </source>
</reference>
<name>RS18_AGRFC</name>
<protein>
    <recommendedName>
        <fullName evidence="1">Small ribosomal subunit protein bS18</fullName>
    </recommendedName>
    <alternativeName>
        <fullName evidence="3">30S ribosomal protein S18</fullName>
    </alternativeName>
</protein>
<organism>
    <name type="scientific">Agrobacterium fabrum (strain C58 / ATCC 33970)</name>
    <name type="common">Agrobacterium tumefaciens (strain C58)</name>
    <dbReference type="NCBI Taxonomy" id="176299"/>
    <lineage>
        <taxon>Bacteria</taxon>
        <taxon>Pseudomonadati</taxon>
        <taxon>Pseudomonadota</taxon>
        <taxon>Alphaproteobacteria</taxon>
        <taxon>Hyphomicrobiales</taxon>
        <taxon>Rhizobiaceae</taxon>
        <taxon>Rhizobium/Agrobacterium group</taxon>
        <taxon>Agrobacterium</taxon>
        <taxon>Agrobacterium tumefaciens complex</taxon>
    </lineage>
</organism>
<accession>Q8UGE8</accession>
<keyword id="KW-1185">Reference proteome</keyword>
<keyword id="KW-0687">Ribonucleoprotein</keyword>
<keyword id="KW-0689">Ribosomal protein</keyword>
<keyword id="KW-0694">RNA-binding</keyword>
<keyword id="KW-0699">rRNA-binding</keyword>
<feature type="chain" id="PRO_0000111105" description="Small ribosomal subunit protein bS18">
    <location>
        <begin position="1"/>
        <end position="82"/>
    </location>
</feature>
<feature type="region of interest" description="Disordered" evidence="2">
    <location>
        <begin position="1"/>
        <end position="25"/>
    </location>
</feature>
<gene>
    <name evidence="1" type="primary">rpsR</name>
    <name type="ordered locus">Atu1090</name>
    <name type="ORF">AGR_C_2021</name>
</gene>
<comment type="function">
    <text evidence="1">Binds as a heterodimer with protein bS6 to the central domain of the 16S rRNA, where it helps stabilize the platform of the 30S subunit.</text>
</comment>
<comment type="subunit">
    <text evidence="1">Part of the 30S ribosomal subunit. Forms a tight heterodimer with protein bS6.</text>
</comment>
<comment type="similarity">
    <text evidence="1">Belongs to the bacterial ribosomal protein bS18 family.</text>
</comment>
<sequence length="82" mass="9400">MADTSSSQARRPFHRRRKTCPFSGANAPKIDYKDVRLLQRYISERGKIVPSRITAVSQKKQRELAQAIKRARFLGLLPYVVA</sequence>
<proteinExistence type="inferred from homology"/>
<dbReference type="EMBL" id="AE007869">
    <property type="protein sequence ID" value="AAL42103.1"/>
    <property type="molecule type" value="Genomic_DNA"/>
</dbReference>
<dbReference type="PIR" id="AI2710">
    <property type="entry name" value="AI2710"/>
</dbReference>
<dbReference type="RefSeq" id="NP_529002.1">
    <property type="nucleotide sequence ID" value="NC_003062.2"/>
</dbReference>
<dbReference type="RefSeq" id="WP_003496832.1">
    <property type="nucleotide sequence ID" value="NC_003062.2"/>
</dbReference>
<dbReference type="SMR" id="Q8UGE8"/>
<dbReference type="STRING" id="176299.Atu1090"/>
<dbReference type="EnsemblBacteria" id="AAL42103">
    <property type="protein sequence ID" value="AAL42103"/>
    <property type="gene ID" value="Atu1090"/>
</dbReference>
<dbReference type="GeneID" id="92770267"/>
<dbReference type="KEGG" id="atu:Atu1090"/>
<dbReference type="PATRIC" id="fig|176299.10.peg.1106"/>
<dbReference type="eggNOG" id="COG0238">
    <property type="taxonomic scope" value="Bacteria"/>
</dbReference>
<dbReference type="HOGENOM" id="CLU_148710_2_2_5"/>
<dbReference type="OrthoDB" id="9812008at2"/>
<dbReference type="PhylomeDB" id="Q8UGE8"/>
<dbReference type="BioCyc" id="AGRO:ATU1090-MONOMER"/>
<dbReference type="PRO" id="PR:Q8UGE8"/>
<dbReference type="Proteomes" id="UP000000813">
    <property type="component" value="Chromosome circular"/>
</dbReference>
<dbReference type="GO" id="GO:0022627">
    <property type="term" value="C:cytosolic small ribosomal subunit"/>
    <property type="evidence" value="ECO:0007669"/>
    <property type="project" value="TreeGrafter"/>
</dbReference>
<dbReference type="GO" id="GO:0070181">
    <property type="term" value="F:small ribosomal subunit rRNA binding"/>
    <property type="evidence" value="ECO:0007669"/>
    <property type="project" value="TreeGrafter"/>
</dbReference>
<dbReference type="GO" id="GO:0003735">
    <property type="term" value="F:structural constituent of ribosome"/>
    <property type="evidence" value="ECO:0007669"/>
    <property type="project" value="InterPro"/>
</dbReference>
<dbReference type="GO" id="GO:0006412">
    <property type="term" value="P:translation"/>
    <property type="evidence" value="ECO:0007669"/>
    <property type="project" value="UniProtKB-UniRule"/>
</dbReference>
<dbReference type="Gene3D" id="4.10.640.10">
    <property type="entry name" value="Ribosomal protein S18"/>
    <property type="match status" value="1"/>
</dbReference>
<dbReference type="HAMAP" id="MF_00270">
    <property type="entry name" value="Ribosomal_bS18"/>
    <property type="match status" value="1"/>
</dbReference>
<dbReference type="InterPro" id="IPR001648">
    <property type="entry name" value="Ribosomal_bS18"/>
</dbReference>
<dbReference type="InterPro" id="IPR018275">
    <property type="entry name" value="Ribosomal_bS18_CS"/>
</dbReference>
<dbReference type="InterPro" id="IPR036870">
    <property type="entry name" value="Ribosomal_bS18_sf"/>
</dbReference>
<dbReference type="NCBIfam" id="TIGR00165">
    <property type="entry name" value="S18"/>
    <property type="match status" value="1"/>
</dbReference>
<dbReference type="PANTHER" id="PTHR13479">
    <property type="entry name" value="30S RIBOSOMAL PROTEIN S18"/>
    <property type="match status" value="1"/>
</dbReference>
<dbReference type="PANTHER" id="PTHR13479:SF40">
    <property type="entry name" value="SMALL RIBOSOMAL SUBUNIT PROTEIN BS18M"/>
    <property type="match status" value="1"/>
</dbReference>
<dbReference type="Pfam" id="PF01084">
    <property type="entry name" value="Ribosomal_S18"/>
    <property type="match status" value="1"/>
</dbReference>
<dbReference type="PRINTS" id="PR00974">
    <property type="entry name" value="RIBOSOMALS18"/>
</dbReference>
<dbReference type="SUPFAM" id="SSF46911">
    <property type="entry name" value="Ribosomal protein S18"/>
    <property type="match status" value="1"/>
</dbReference>
<dbReference type="PROSITE" id="PS00057">
    <property type="entry name" value="RIBOSOMAL_S18"/>
    <property type="match status" value="1"/>
</dbReference>
<evidence type="ECO:0000255" key="1">
    <source>
        <dbReference type="HAMAP-Rule" id="MF_00270"/>
    </source>
</evidence>
<evidence type="ECO:0000256" key="2">
    <source>
        <dbReference type="SAM" id="MobiDB-lite"/>
    </source>
</evidence>
<evidence type="ECO:0000305" key="3"/>